<dbReference type="EC" id="4.2.1.11" evidence="1"/>
<dbReference type="EMBL" id="AE016828">
    <property type="protein sequence ID" value="AAO91170.1"/>
    <property type="molecule type" value="Genomic_DNA"/>
</dbReference>
<dbReference type="RefSeq" id="NP_820656.1">
    <property type="nucleotide sequence ID" value="NC_002971.4"/>
</dbReference>
<dbReference type="RefSeq" id="WP_005770583.1">
    <property type="nucleotide sequence ID" value="NZ_CDBG01000001.1"/>
</dbReference>
<dbReference type="PDB" id="3TQP">
    <property type="method" value="X-ray"/>
    <property type="resolution" value="2.20 A"/>
    <property type="chains" value="A/B=1-428"/>
</dbReference>
<dbReference type="PDBsum" id="3TQP"/>
<dbReference type="SMR" id="Q83B44"/>
<dbReference type="STRING" id="227377.CBU_1674"/>
<dbReference type="DNASU" id="1209585"/>
<dbReference type="EnsemblBacteria" id="AAO91170">
    <property type="protein sequence ID" value="AAO91170"/>
    <property type="gene ID" value="CBU_1674"/>
</dbReference>
<dbReference type="GeneID" id="1209585"/>
<dbReference type="KEGG" id="cbu:CBU_1674"/>
<dbReference type="PATRIC" id="fig|227377.7.peg.1663"/>
<dbReference type="eggNOG" id="COG0148">
    <property type="taxonomic scope" value="Bacteria"/>
</dbReference>
<dbReference type="HOGENOM" id="CLU_031223_2_1_6"/>
<dbReference type="OrthoDB" id="9804716at2"/>
<dbReference type="UniPathway" id="UPA00109">
    <property type="reaction ID" value="UER00187"/>
</dbReference>
<dbReference type="EvolutionaryTrace" id="Q83B44"/>
<dbReference type="Proteomes" id="UP000002671">
    <property type="component" value="Chromosome"/>
</dbReference>
<dbReference type="GO" id="GO:0009986">
    <property type="term" value="C:cell surface"/>
    <property type="evidence" value="ECO:0007669"/>
    <property type="project" value="UniProtKB-SubCell"/>
</dbReference>
<dbReference type="GO" id="GO:0005576">
    <property type="term" value="C:extracellular region"/>
    <property type="evidence" value="ECO:0007669"/>
    <property type="project" value="UniProtKB-SubCell"/>
</dbReference>
<dbReference type="GO" id="GO:0000015">
    <property type="term" value="C:phosphopyruvate hydratase complex"/>
    <property type="evidence" value="ECO:0000318"/>
    <property type="project" value="GO_Central"/>
</dbReference>
<dbReference type="GO" id="GO:0000287">
    <property type="term" value="F:magnesium ion binding"/>
    <property type="evidence" value="ECO:0007669"/>
    <property type="project" value="UniProtKB-UniRule"/>
</dbReference>
<dbReference type="GO" id="GO:0004634">
    <property type="term" value="F:phosphopyruvate hydratase activity"/>
    <property type="evidence" value="ECO:0000318"/>
    <property type="project" value="GO_Central"/>
</dbReference>
<dbReference type="GO" id="GO:0006096">
    <property type="term" value="P:glycolytic process"/>
    <property type="evidence" value="ECO:0000318"/>
    <property type="project" value="GO_Central"/>
</dbReference>
<dbReference type="CDD" id="cd03313">
    <property type="entry name" value="enolase"/>
    <property type="match status" value="1"/>
</dbReference>
<dbReference type="FunFam" id="3.20.20.120:FF:000001">
    <property type="entry name" value="Enolase"/>
    <property type="match status" value="1"/>
</dbReference>
<dbReference type="FunFam" id="3.30.390.10:FF:000001">
    <property type="entry name" value="Enolase"/>
    <property type="match status" value="1"/>
</dbReference>
<dbReference type="Gene3D" id="3.20.20.120">
    <property type="entry name" value="Enolase-like C-terminal domain"/>
    <property type="match status" value="1"/>
</dbReference>
<dbReference type="Gene3D" id="3.30.390.10">
    <property type="entry name" value="Enolase-like, N-terminal domain"/>
    <property type="match status" value="1"/>
</dbReference>
<dbReference type="HAMAP" id="MF_00318">
    <property type="entry name" value="Enolase"/>
    <property type="match status" value="1"/>
</dbReference>
<dbReference type="InterPro" id="IPR000941">
    <property type="entry name" value="Enolase"/>
</dbReference>
<dbReference type="InterPro" id="IPR036849">
    <property type="entry name" value="Enolase-like_C_sf"/>
</dbReference>
<dbReference type="InterPro" id="IPR029017">
    <property type="entry name" value="Enolase-like_N"/>
</dbReference>
<dbReference type="InterPro" id="IPR020810">
    <property type="entry name" value="Enolase_C"/>
</dbReference>
<dbReference type="InterPro" id="IPR020809">
    <property type="entry name" value="Enolase_CS"/>
</dbReference>
<dbReference type="InterPro" id="IPR020811">
    <property type="entry name" value="Enolase_N"/>
</dbReference>
<dbReference type="NCBIfam" id="TIGR01060">
    <property type="entry name" value="eno"/>
    <property type="match status" value="1"/>
</dbReference>
<dbReference type="PANTHER" id="PTHR11902">
    <property type="entry name" value="ENOLASE"/>
    <property type="match status" value="1"/>
</dbReference>
<dbReference type="PANTHER" id="PTHR11902:SF1">
    <property type="entry name" value="ENOLASE"/>
    <property type="match status" value="1"/>
</dbReference>
<dbReference type="Pfam" id="PF00113">
    <property type="entry name" value="Enolase_C"/>
    <property type="match status" value="1"/>
</dbReference>
<dbReference type="Pfam" id="PF03952">
    <property type="entry name" value="Enolase_N"/>
    <property type="match status" value="1"/>
</dbReference>
<dbReference type="PIRSF" id="PIRSF001400">
    <property type="entry name" value="Enolase"/>
    <property type="match status" value="1"/>
</dbReference>
<dbReference type="PRINTS" id="PR00148">
    <property type="entry name" value="ENOLASE"/>
</dbReference>
<dbReference type="SFLD" id="SFLDS00001">
    <property type="entry name" value="Enolase"/>
    <property type="match status" value="1"/>
</dbReference>
<dbReference type="SFLD" id="SFLDF00002">
    <property type="entry name" value="enolase"/>
    <property type="match status" value="1"/>
</dbReference>
<dbReference type="SMART" id="SM01192">
    <property type="entry name" value="Enolase_C"/>
    <property type="match status" value="1"/>
</dbReference>
<dbReference type="SMART" id="SM01193">
    <property type="entry name" value="Enolase_N"/>
    <property type="match status" value="1"/>
</dbReference>
<dbReference type="SUPFAM" id="SSF51604">
    <property type="entry name" value="Enolase C-terminal domain-like"/>
    <property type="match status" value="1"/>
</dbReference>
<dbReference type="SUPFAM" id="SSF54826">
    <property type="entry name" value="Enolase N-terminal domain-like"/>
    <property type="match status" value="1"/>
</dbReference>
<dbReference type="PROSITE" id="PS00164">
    <property type="entry name" value="ENOLASE"/>
    <property type="match status" value="1"/>
</dbReference>
<name>ENO_COXBU</name>
<keyword id="KW-0002">3D-structure</keyword>
<keyword id="KW-0963">Cytoplasm</keyword>
<keyword id="KW-0324">Glycolysis</keyword>
<keyword id="KW-0456">Lyase</keyword>
<keyword id="KW-0460">Magnesium</keyword>
<keyword id="KW-0479">Metal-binding</keyword>
<keyword id="KW-1185">Reference proteome</keyword>
<keyword id="KW-0964">Secreted</keyword>
<protein>
    <recommendedName>
        <fullName evidence="1">Enolase</fullName>
        <ecNumber evidence="1">4.2.1.11</ecNumber>
    </recommendedName>
    <alternativeName>
        <fullName evidence="1">2-phospho-D-glycerate hydro-lyase</fullName>
    </alternativeName>
    <alternativeName>
        <fullName evidence="1">2-phosphoglycerate dehydratase</fullName>
    </alternativeName>
    <alternativeName>
        <fullName evidence="3">Phosphopyruvate dehydratase</fullName>
    </alternativeName>
</protein>
<evidence type="ECO:0000255" key="1">
    <source>
        <dbReference type="HAMAP-Rule" id="MF_00318"/>
    </source>
</evidence>
<evidence type="ECO:0000269" key="2">
    <source>
    </source>
</evidence>
<evidence type="ECO:0000303" key="3">
    <source>
    </source>
</evidence>
<evidence type="ECO:0007744" key="4">
    <source>
        <dbReference type="PDB" id="3TQP"/>
    </source>
</evidence>
<evidence type="ECO:0007829" key="5">
    <source>
        <dbReference type="PDB" id="3TQP"/>
    </source>
</evidence>
<gene>
    <name evidence="1" type="primary">eno</name>
    <name type="ordered locus">CBU_1674</name>
</gene>
<organism>
    <name type="scientific">Coxiella burnetii (strain RSA 493 / Nine Mile phase I)</name>
    <dbReference type="NCBI Taxonomy" id="227377"/>
    <lineage>
        <taxon>Bacteria</taxon>
        <taxon>Pseudomonadati</taxon>
        <taxon>Pseudomonadota</taxon>
        <taxon>Gammaproteobacteria</taxon>
        <taxon>Legionellales</taxon>
        <taxon>Coxiellaceae</taxon>
        <taxon>Coxiella</taxon>
    </lineage>
</organism>
<feature type="chain" id="PRO_0000133877" description="Enolase">
    <location>
        <begin position="1"/>
        <end position="428"/>
    </location>
</feature>
<feature type="active site" description="Proton donor" evidence="1">
    <location>
        <position position="207"/>
    </location>
</feature>
<feature type="active site" description="Proton acceptor" evidence="1">
    <location>
        <position position="337"/>
    </location>
</feature>
<feature type="binding site" evidence="1">
    <location>
        <position position="165"/>
    </location>
    <ligand>
        <name>(2R)-2-phosphoglycerate</name>
        <dbReference type="ChEBI" id="CHEBI:58289"/>
    </ligand>
</feature>
<feature type="binding site" evidence="1 2 4">
    <location>
        <position position="244"/>
    </location>
    <ligand>
        <name>Mg(2+)</name>
        <dbReference type="ChEBI" id="CHEBI:18420"/>
    </ligand>
</feature>
<feature type="binding site" evidence="1 2 4">
    <location>
        <position position="285"/>
    </location>
    <ligand>
        <name>Mg(2+)</name>
        <dbReference type="ChEBI" id="CHEBI:18420"/>
    </ligand>
</feature>
<feature type="binding site" evidence="1 2 4">
    <location>
        <position position="312"/>
    </location>
    <ligand>
        <name>Mg(2+)</name>
        <dbReference type="ChEBI" id="CHEBI:18420"/>
    </ligand>
</feature>
<feature type="binding site" evidence="1">
    <location>
        <position position="337"/>
    </location>
    <ligand>
        <name>(2R)-2-phosphoglycerate</name>
        <dbReference type="ChEBI" id="CHEBI:58289"/>
    </ligand>
</feature>
<feature type="binding site" evidence="1">
    <location>
        <position position="366"/>
    </location>
    <ligand>
        <name>(2R)-2-phosphoglycerate</name>
        <dbReference type="ChEBI" id="CHEBI:58289"/>
    </ligand>
</feature>
<feature type="binding site" evidence="1">
    <location>
        <position position="367"/>
    </location>
    <ligand>
        <name>(2R)-2-phosphoglycerate</name>
        <dbReference type="ChEBI" id="CHEBI:58289"/>
    </ligand>
</feature>
<feature type="binding site" evidence="1">
    <location>
        <position position="388"/>
    </location>
    <ligand>
        <name>(2R)-2-phosphoglycerate</name>
        <dbReference type="ChEBI" id="CHEBI:58289"/>
    </ligand>
</feature>
<feature type="strand" evidence="5">
    <location>
        <begin position="5"/>
        <end position="14"/>
    </location>
</feature>
<feature type="strand" evidence="5">
    <location>
        <begin position="20"/>
        <end position="28"/>
    </location>
</feature>
<feature type="strand" evidence="5">
    <location>
        <begin position="33"/>
        <end position="37"/>
    </location>
</feature>
<feature type="helix" evidence="5">
    <location>
        <begin position="60"/>
        <end position="62"/>
    </location>
</feature>
<feature type="helix" evidence="5">
    <location>
        <begin position="66"/>
        <end position="73"/>
    </location>
</feature>
<feature type="helix" evidence="5">
    <location>
        <begin position="75"/>
        <end position="80"/>
    </location>
</feature>
<feature type="helix" evidence="5">
    <location>
        <begin position="88"/>
        <end position="99"/>
    </location>
</feature>
<feature type="turn" evidence="5">
    <location>
        <begin position="105"/>
        <end position="107"/>
    </location>
</feature>
<feature type="helix" evidence="5">
    <location>
        <begin position="109"/>
        <end position="126"/>
    </location>
</feature>
<feature type="helix" evidence="5">
    <location>
        <begin position="131"/>
        <end position="136"/>
    </location>
</feature>
<feature type="turn" evidence="5">
    <location>
        <begin position="137"/>
        <end position="139"/>
    </location>
</feature>
<feature type="strand" evidence="5">
    <location>
        <begin position="146"/>
        <end position="153"/>
    </location>
</feature>
<feature type="strand" evidence="5">
    <location>
        <begin position="163"/>
        <end position="170"/>
    </location>
</feature>
<feature type="helix" evidence="5">
    <location>
        <begin position="177"/>
        <end position="197"/>
    </location>
</feature>
<feature type="helix" evidence="5">
    <location>
        <begin position="217"/>
        <end position="230"/>
    </location>
</feature>
<feature type="turn" evidence="5">
    <location>
        <begin position="235"/>
        <end position="237"/>
    </location>
</feature>
<feature type="strand" evidence="5">
    <location>
        <begin position="240"/>
        <end position="244"/>
    </location>
</feature>
<feature type="helix" evidence="5">
    <location>
        <begin position="247"/>
        <end position="249"/>
    </location>
</feature>
<feature type="strand" evidence="5">
    <location>
        <begin position="250"/>
        <end position="252"/>
    </location>
</feature>
<feature type="strand" evidence="5">
    <location>
        <begin position="259"/>
        <end position="261"/>
    </location>
</feature>
<feature type="helix" evidence="5">
    <location>
        <begin position="265"/>
        <end position="278"/>
    </location>
</feature>
<feature type="strand" evidence="5">
    <location>
        <begin position="281"/>
        <end position="285"/>
    </location>
</feature>
<feature type="helix" evidence="5">
    <location>
        <begin position="293"/>
        <end position="303"/>
    </location>
</feature>
<feature type="turn" evidence="5">
    <location>
        <begin position="304"/>
        <end position="306"/>
    </location>
</feature>
<feature type="strand" evidence="5">
    <location>
        <begin position="307"/>
        <end position="312"/>
    </location>
</feature>
<feature type="turn" evidence="5">
    <location>
        <begin position="313"/>
        <end position="317"/>
    </location>
</feature>
<feature type="helix" evidence="5">
    <location>
        <begin position="319"/>
        <end position="327"/>
    </location>
</feature>
<feature type="strand" evidence="5">
    <location>
        <begin position="332"/>
        <end position="336"/>
    </location>
</feature>
<feature type="helix" evidence="5">
    <location>
        <begin position="338"/>
        <end position="341"/>
    </location>
</feature>
<feature type="helix" evidence="5">
    <location>
        <begin position="344"/>
        <end position="356"/>
    </location>
</feature>
<feature type="strand" evidence="5">
    <location>
        <begin position="360"/>
        <end position="364"/>
    </location>
</feature>
<feature type="helix" evidence="5">
    <location>
        <begin position="374"/>
        <end position="381"/>
    </location>
</feature>
<feature type="strand" evidence="5">
    <location>
        <begin position="385"/>
        <end position="388"/>
    </location>
</feature>
<feature type="strand" evidence="5">
    <location>
        <begin position="392"/>
        <end position="394"/>
    </location>
</feature>
<feature type="helix" evidence="5">
    <location>
        <begin position="395"/>
        <end position="411"/>
    </location>
</feature>
<feature type="helix" evidence="5">
    <location>
        <begin position="419"/>
        <end position="422"/>
    </location>
</feature>
<sequence length="428" mass="46626">MTATITDINAHEILDSRANPTLEVRVTLSSQAYGCAAVPSGASTGEREAVELRDNDLERYGGKGVLQAVENVNGPIRDALLGQDPRSQEEIDRIMIELDGTENKANLGANAILGVSLAVAYAAANNADLPLYRYLGGDGGPFSMPVPMMNIINGGAHATNNLDFQEFMIVPVGAPTFAEALRYGAEVFHALKKRLVSRGLMSAVGDEGGFAPDLPNNEAAFELILEAIEDANYVPGKDIYLALDAASSELYQNGRYDFENNQLTSEEMIDRLTEWTKKYPVISIEDGLSENDWAGWKLLTERLENKVQLVGDDIFVTNPDILEKGIKKNIANAILVKLNQIGTLTETLATVGLAKSNKYGVIISHRSGETEDTTIADLAVATDARQIKTGSLCRSDRVAKYNRLLQIERELNDQAPYAGKEAFLFNRK</sequence>
<accession>Q83B44</accession>
<proteinExistence type="evidence at protein level"/>
<reference key="1">
    <citation type="journal article" date="2003" name="Proc. Natl. Acad. Sci. U.S.A.">
        <title>Complete genome sequence of the Q-fever pathogen, Coxiella burnetii.</title>
        <authorList>
            <person name="Seshadri R."/>
            <person name="Paulsen I.T."/>
            <person name="Eisen J.A."/>
            <person name="Read T.D."/>
            <person name="Nelson K.E."/>
            <person name="Nelson W.C."/>
            <person name="Ward N.L."/>
            <person name="Tettelin H."/>
            <person name="Davidsen T.M."/>
            <person name="Beanan M.J."/>
            <person name="DeBoy R.T."/>
            <person name="Daugherty S.C."/>
            <person name="Brinkac L.M."/>
            <person name="Madupu R."/>
            <person name="Dodson R.J."/>
            <person name="Khouri H.M."/>
            <person name="Lee K.H."/>
            <person name="Carty H.A."/>
            <person name="Scanlan D."/>
            <person name="Heinzen R.A."/>
            <person name="Thompson H.A."/>
            <person name="Samuel J.E."/>
            <person name="Fraser C.M."/>
            <person name="Heidelberg J.F."/>
        </authorList>
    </citation>
    <scope>NUCLEOTIDE SEQUENCE [LARGE SCALE GENOMIC DNA]</scope>
    <source>
        <strain>RSA 493 / Nine Mile phase I</strain>
    </source>
</reference>
<reference evidence="4" key="2">
    <citation type="journal article" date="2015" name="Proteins">
        <title>Structural genomics for drug design against the pathogen Coxiella burnetii.</title>
        <authorList>
            <person name="Franklin M.C."/>
            <person name="Cheung J."/>
            <person name="Rudolph M.J."/>
            <person name="Burshteyn F."/>
            <person name="Cassidy M."/>
            <person name="Gary E."/>
            <person name="Hillerich B."/>
            <person name="Yao Z.K."/>
            <person name="Carlier P.R."/>
            <person name="Totrov M."/>
            <person name="Love J.D."/>
        </authorList>
    </citation>
    <scope>X-RAY CRYSTALLOGRAPHY (2.20 ANGSTROMS) IN COMPLEX WITH MG(2+)</scope>
    <scope>COFACTOR</scope>
    <scope>SUBUNIT</scope>
    <source>
        <strain>RSA 493 / Nine Mile phase I</strain>
    </source>
</reference>
<comment type="function">
    <text evidence="1">Catalyzes the reversible conversion of 2-phosphoglycerate (2-PG) into phosphoenolpyruvate (PEP). It is essential for the degradation of carbohydrates via glycolysis.</text>
</comment>
<comment type="catalytic activity">
    <reaction evidence="1">
        <text>(2R)-2-phosphoglycerate = phosphoenolpyruvate + H2O</text>
        <dbReference type="Rhea" id="RHEA:10164"/>
        <dbReference type="ChEBI" id="CHEBI:15377"/>
        <dbReference type="ChEBI" id="CHEBI:58289"/>
        <dbReference type="ChEBI" id="CHEBI:58702"/>
        <dbReference type="EC" id="4.2.1.11"/>
    </reaction>
</comment>
<comment type="cofactor">
    <cofactor evidence="1 2">
        <name>Mg(2+)</name>
        <dbReference type="ChEBI" id="CHEBI:18420"/>
    </cofactor>
    <text evidence="1">Binds a second Mg(2+) ion via substrate during catalysis.</text>
</comment>
<comment type="pathway">
    <text evidence="1">Carbohydrate degradation; glycolysis; pyruvate from D-glyceraldehyde 3-phosphate: step 4/5.</text>
</comment>
<comment type="subunit">
    <text evidence="1 2">Homodimer (PubMed:26033498). Component of the RNA degradosome, a multiprotein complex involved in RNA processing and mRNA degradation (By similarity).</text>
</comment>
<comment type="subcellular location">
    <subcellularLocation>
        <location evidence="1">Cytoplasm</location>
    </subcellularLocation>
    <subcellularLocation>
        <location evidence="1">Secreted</location>
    </subcellularLocation>
    <subcellularLocation>
        <location evidence="1">Cell surface</location>
    </subcellularLocation>
    <text evidence="1">Fractions of enolase are present in both the cytoplasm and on the cell surface.</text>
</comment>
<comment type="similarity">
    <text evidence="1">Belongs to the enolase family.</text>
</comment>